<reference key="1">
    <citation type="journal article" date="1996" name="Proc. Natl. Acad. Sci. U.S.A.">
        <title>Cloning of thermostable DNA polymerases from hyperthermophilic marine Archaea with emphasis on Thermococcus sp. 9oN-7 and mutations affecting 3'-5' exonuclease activity.</title>
        <authorList>
            <person name="Southworth M.W."/>
            <person name="Kong H."/>
            <person name="Kucera R.B."/>
            <person name="Ware J."/>
            <person name="Jannasch H.W."/>
            <person name="Perler F.B."/>
        </authorList>
    </citation>
    <scope>NUCLEOTIDE SEQUENCE [GENOMIC DNA]</scope>
</reference>
<name>DPOL_THES9</name>
<dbReference type="EC" id="2.7.7.7"/>
<dbReference type="EMBL" id="U47108">
    <property type="protein sequence ID" value="AAA88769.1"/>
    <property type="molecule type" value="Genomic_DNA"/>
</dbReference>
<dbReference type="PIR" id="S67920">
    <property type="entry name" value="S67920"/>
</dbReference>
<dbReference type="PDB" id="1QHT">
    <property type="method" value="X-ray"/>
    <property type="resolution" value="2.10 A"/>
    <property type="chains" value="A=1-775"/>
</dbReference>
<dbReference type="PDB" id="4K8X">
    <property type="method" value="X-ray"/>
    <property type="resolution" value="2.28 A"/>
    <property type="chains" value="A=1-775"/>
</dbReference>
<dbReference type="PDB" id="5OMQ">
    <property type="method" value="X-ray"/>
    <property type="resolution" value="2.20 A"/>
    <property type="chains" value="A=1-775"/>
</dbReference>
<dbReference type="PDB" id="5OMV">
    <property type="method" value="X-ray"/>
    <property type="resolution" value="2.00 A"/>
    <property type="chains" value="A=1-775"/>
</dbReference>
<dbReference type="PDB" id="6IS7">
    <property type="method" value="X-ray"/>
    <property type="resolution" value="2.80 A"/>
    <property type="chains" value="A/B=1-775"/>
</dbReference>
<dbReference type="PDB" id="6ISF">
    <property type="method" value="X-ray"/>
    <property type="resolution" value="2.80 A"/>
    <property type="chains" value="A/B=1-775"/>
</dbReference>
<dbReference type="PDB" id="6ISG">
    <property type="method" value="X-ray"/>
    <property type="resolution" value="3.40 A"/>
    <property type="chains" value="A=1-775"/>
</dbReference>
<dbReference type="PDB" id="6ISH">
    <property type="method" value="X-ray"/>
    <property type="resolution" value="3.30 A"/>
    <property type="chains" value="A=1-775"/>
</dbReference>
<dbReference type="PDB" id="6ISI">
    <property type="method" value="X-ray"/>
    <property type="resolution" value="3.20 A"/>
    <property type="chains" value="A=1-775"/>
</dbReference>
<dbReference type="PDBsum" id="1QHT"/>
<dbReference type="PDBsum" id="4K8X"/>
<dbReference type="PDBsum" id="5OMQ"/>
<dbReference type="PDBsum" id="5OMV"/>
<dbReference type="PDBsum" id="6IS7"/>
<dbReference type="PDBsum" id="6ISF"/>
<dbReference type="PDBsum" id="6ISG"/>
<dbReference type="PDBsum" id="6ISH"/>
<dbReference type="PDBsum" id="6ISI"/>
<dbReference type="SMR" id="Q56366"/>
<dbReference type="EvolutionaryTrace" id="Q56366"/>
<dbReference type="GO" id="GO:0003677">
    <property type="term" value="F:DNA binding"/>
    <property type="evidence" value="ECO:0007669"/>
    <property type="project" value="UniProtKB-KW"/>
</dbReference>
<dbReference type="GO" id="GO:0003887">
    <property type="term" value="F:DNA-directed DNA polymerase activity"/>
    <property type="evidence" value="ECO:0007669"/>
    <property type="project" value="UniProtKB-KW"/>
</dbReference>
<dbReference type="GO" id="GO:0000166">
    <property type="term" value="F:nucleotide binding"/>
    <property type="evidence" value="ECO:0007669"/>
    <property type="project" value="InterPro"/>
</dbReference>
<dbReference type="GO" id="GO:0006261">
    <property type="term" value="P:DNA-templated DNA replication"/>
    <property type="evidence" value="ECO:0007669"/>
    <property type="project" value="TreeGrafter"/>
</dbReference>
<dbReference type="CDD" id="cd05780">
    <property type="entry name" value="DNA_polB_Kod1_like_exo"/>
    <property type="match status" value="1"/>
</dbReference>
<dbReference type="CDD" id="cd05536">
    <property type="entry name" value="POLBc_B3"/>
    <property type="match status" value="1"/>
</dbReference>
<dbReference type="FunFam" id="3.30.342.10:FF:000015">
    <property type="entry name" value="DNA polymerase"/>
    <property type="match status" value="1"/>
</dbReference>
<dbReference type="FunFam" id="1.10.132.60:FF:000013">
    <property type="entry name" value="DNA polymerase Pol2"/>
    <property type="match status" value="1"/>
</dbReference>
<dbReference type="Gene3D" id="1.10.132.60">
    <property type="entry name" value="DNA polymerase family B, C-terminal domain"/>
    <property type="match status" value="1"/>
</dbReference>
<dbReference type="Gene3D" id="3.30.342.10">
    <property type="entry name" value="DNA Polymerase, chain B, domain 1"/>
    <property type="match status" value="1"/>
</dbReference>
<dbReference type="Gene3D" id="1.10.287.690">
    <property type="entry name" value="Helix hairpin bin"/>
    <property type="match status" value="1"/>
</dbReference>
<dbReference type="Gene3D" id="3.90.1600.10">
    <property type="entry name" value="Palm domain of DNA polymerase"/>
    <property type="match status" value="1"/>
</dbReference>
<dbReference type="Gene3D" id="3.30.420.10">
    <property type="entry name" value="Ribonuclease H-like superfamily/Ribonuclease H"/>
    <property type="match status" value="1"/>
</dbReference>
<dbReference type="InterPro" id="IPR006172">
    <property type="entry name" value="DNA-dir_DNA_pol_B"/>
</dbReference>
<dbReference type="InterPro" id="IPR017964">
    <property type="entry name" value="DNA-dir_DNA_pol_B_CS"/>
</dbReference>
<dbReference type="InterPro" id="IPR006133">
    <property type="entry name" value="DNA-dir_DNA_pol_B_exonuc"/>
</dbReference>
<dbReference type="InterPro" id="IPR006134">
    <property type="entry name" value="DNA-dir_DNA_pol_B_multi_dom"/>
</dbReference>
<dbReference type="InterPro" id="IPR043502">
    <property type="entry name" value="DNA/RNA_pol_sf"/>
</dbReference>
<dbReference type="InterPro" id="IPR042087">
    <property type="entry name" value="DNA_pol_B_thumb"/>
</dbReference>
<dbReference type="InterPro" id="IPR023211">
    <property type="entry name" value="DNA_pol_palm_dom_sf"/>
</dbReference>
<dbReference type="InterPro" id="IPR050240">
    <property type="entry name" value="DNA_pol_type-B"/>
</dbReference>
<dbReference type="InterPro" id="IPR012337">
    <property type="entry name" value="RNaseH-like_sf"/>
</dbReference>
<dbReference type="InterPro" id="IPR036397">
    <property type="entry name" value="RNaseH_sf"/>
</dbReference>
<dbReference type="NCBIfam" id="TIGR00592">
    <property type="entry name" value="pol2"/>
    <property type="match status" value="2"/>
</dbReference>
<dbReference type="PANTHER" id="PTHR10322">
    <property type="entry name" value="DNA POLYMERASE CATALYTIC SUBUNIT"/>
    <property type="match status" value="1"/>
</dbReference>
<dbReference type="PANTHER" id="PTHR10322:SF23">
    <property type="entry name" value="DNA POLYMERASE DELTA CATALYTIC SUBUNIT"/>
    <property type="match status" value="1"/>
</dbReference>
<dbReference type="Pfam" id="PF00136">
    <property type="entry name" value="DNA_pol_B"/>
    <property type="match status" value="1"/>
</dbReference>
<dbReference type="Pfam" id="PF03104">
    <property type="entry name" value="DNA_pol_B_exo1"/>
    <property type="match status" value="1"/>
</dbReference>
<dbReference type="PRINTS" id="PR00106">
    <property type="entry name" value="DNAPOLB"/>
</dbReference>
<dbReference type="SMART" id="SM00486">
    <property type="entry name" value="POLBc"/>
    <property type="match status" value="1"/>
</dbReference>
<dbReference type="SUPFAM" id="SSF56672">
    <property type="entry name" value="DNA/RNA polymerases"/>
    <property type="match status" value="1"/>
</dbReference>
<dbReference type="SUPFAM" id="SSF53098">
    <property type="entry name" value="Ribonuclease H-like"/>
    <property type="match status" value="1"/>
</dbReference>
<dbReference type="PROSITE" id="PS00116">
    <property type="entry name" value="DNA_POLYMERASE_B"/>
    <property type="match status" value="1"/>
</dbReference>
<gene>
    <name type="primary">pol</name>
    <name type="synonym">polA</name>
</gene>
<protein>
    <recommendedName>
        <fullName>DNA polymerase</fullName>
        <ecNumber>2.7.7.7</ecNumber>
    </recommendedName>
</protein>
<accession>Q56366</accession>
<sequence>MILDTDYITENGKPVIRVFKKENGEFKIEYDRTFEPYFYALLKDDSAIEDVKKVTAKRHGTVVKVKRAEKVQKKFLGRPIEVWKLYFNHPQDVPAIRDRIRAHPAVVDIYEYDIPFAKRYLIDKGLIPMEGDEELTMLAFDIETLYHEGEEFGTGPILMISYADGSEARVITWKKIDLPYVDVVSTEKEMIKRFLRVVREKDPDVLITYNGDNFDFAYLKKRCEELGIKFTLGRDGSEPKIQRMGDRFAVEVKGRIHFDLYPVIRRTINLPTYTLEAVYEAVFGKPKEKVYAEEIAQAWESGEGLERVARYSMEDAKVTYELGREFFPMEAQLSRLIGQSLWDVSRSSTGNLVEWFLLRKAYKRNELAPNKPDERELARRRGGYAGGYVKEPERGLWDNIVYLDFRSLYPSIIITHNVSPDTLNREGCKEYDVAPEVGHKFCKDFPGFIPSLLGDLLEERQKIKRKMKATVDPLEKKLLDYRQRAIKILANSFYGYYGYAKARWYCKECAESVTAWGREYIEMVIRELEEKFGFKVLYADTDGLHATIPGADAETVKKKAKEFLKYINPKLPGLLELEYEGFYVRGFFVTKKKYAVIDEEGKITTRGLEIVRRDWSEIAKETQARVLEAILKHGDVEEAVRIVKEVTEKLSKYEVPPEKLVIHEQITRDLRDYKATGPHVAVAKRLAARGVKIRPGTVISYIVLKGSGRIGDRAIPADEFDPTKHRYDAEYYIENQVLPAVERILKAFGYRKEDLRYQKTKQVGLGAWLKVKGKK</sequence>
<keyword id="KW-0002">3D-structure</keyword>
<keyword id="KW-0235">DNA replication</keyword>
<keyword id="KW-0238">DNA-binding</keyword>
<keyword id="KW-0239">DNA-directed DNA polymerase</keyword>
<keyword id="KW-0548">Nucleotidyltransferase</keyword>
<keyword id="KW-0808">Transferase</keyword>
<comment type="catalytic activity">
    <reaction>
        <text>DNA(n) + a 2'-deoxyribonucleoside 5'-triphosphate = DNA(n+1) + diphosphate</text>
        <dbReference type="Rhea" id="RHEA:22508"/>
        <dbReference type="Rhea" id="RHEA-COMP:17339"/>
        <dbReference type="Rhea" id="RHEA-COMP:17340"/>
        <dbReference type="ChEBI" id="CHEBI:33019"/>
        <dbReference type="ChEBI" id="CHEBI:61560"/>
        <dbReference type="ChEBI" id="CHEBI:173112"/>
        <dbReference type="EC" id="2.7.7.7"/>
    </reaction>
</comment>
<comment type="similarity">
    <text evidence="1">Belongs to the DNA polymerase type-B family.</text>
</comment>
<organism>
    <name type="scientific">Thermococcus sp. (strain 9oN-7)</name>
    <dbReference type="NCBI Taxonomy" id="103799"/>
    <lineage>
        <taxon>Archaea</taxon>
        <taxon>Methanobacteriati</taxon>
        <taxon>Methanobacteriota</taxon>
        <taxon>Thermococci</taxon>
        <taxon>Thermococcales</taxon>
        <taxon>Thermococcaceae</taxon>
        <taxon>Thermococcus</taxon>
    </lineage>
</organism>
<evidence type="ECO:0000305" key="1"/>
<evidence type="ECO:0007829" key="2">
    <source>
        <dbReference type="PDB" id="1QHT"/>
    </source>
</evidence>
<evidence type="ECO:0007829" key="3">
    <source>
        <dbReference type="PDB" id="5OMV"/>
    </source>
</evidence>
<evidence type="ECO:0007829" key="4">
    <source>
        <dbReference type="PDB" id="6IS7"/>
    </source>
</evidence>
<evidence type="ECO:0007829" key="5">
    <source>
        <dbReference type="PDB" id="6ISF"/>
    </source>
</evidence>
<evidence type="ECO:0007829" key="6">
    <source>
        <dbReference type="PDB" id="6ISH"/>
    </source>
</evidence>
<proteinExistence type="evidence at protein level"/>
<feature type="chain" id="PRO_0000046489" description="DNA polymerase">
    <location>
        <begin position="1"/>
        <end position="775"/>
    </location>
</feature>
<feature type="strand" evidence="3">
    <location>
        <begin position="2"/>
        <end position="10"/>
    </location>
</feature>
<feature type="strand" evidence="3">
    <location>
        <begin position="13"/>
        <end position="22"/>
    </location>
</feature>
<feature type="strand" evidence="3">
    <location>
        <begin position="25"/>
        <end position="31"/>
    </location>
</feature>
<feature type="strand" evidence="3">
    <location>
        <begin position="37"/>
        <end position="43"/>
    </location>
</feature>
<feature type="helix" evidence="3">
    <location>
        <begin position="45"/>
        <end position="47"/>
    </location>
</feature>
<feature type="helix" evidence="3">
    <location>
        <begin position="48"/>
        <end position="51"/>
    </location>
</feature>
<feature type="strand" evidence="3">
    <location>
        <begin position="55"/>
        <end position="58"/>
    </location>
</feature>
<feature type="strand" evidence="3">
    <location>
        <begin position="61"/>
        <end position="64"/>
    </location>
</feature>
<feature type="strand" evidence="3">
    <location>
        <begin position="67"/>
        <end position="75"/>
    </location>
</feature>
<feature type="strand" evidence="3">
    <location>
        <begin position="78"/>
        <end position="86"/>
    </location>
</feature>
<feature type="helix" evidence="3">
    <location>
        <begin position="92"/>
        <end position="102"/>
    </location>
</feature>
<feature type="strand" evidence="3">
    <location>
        <begin position="106"/>
        <end position="111"/>
    </location>
</feature>
<feature type="helix" evidence="3">
    <location>
        <begin position="116"/>
        <end position="123"/>
    </location>
</feature>
<feature type="strand" evidence="3">
    <location>
        <begin position="137"/>
        <end position="144"/>
    </location>
</feature>
<feature type="strand" evidence="3">
    <location>
        <begin position="157"/>
        <end position="163"/>
    </location>
</feature>
<feature type="strand" evidence="3">
    <location>
        <begin position="168"/>
        <end position="174"/>
    </location>
</feature>
<feature type="strand" evidence="3">
    <location>
        <begin position="181"/>
        <end position="183"/>
    </location>
</feature>
<feature type="helix" evidence="3">
    <location>
        <begin position="187"/>
        <end position="201"/>
    </location>
</feature>
<feature type="strand" evidence="3">
    <location>
        <begin position="204"/>
        <end position="210"/>
    </location>
</feature>
<feature type="turn" evidence="3">
    <location>
        <begin position="211"/>
        <end position="214"/>
    </location>
</feature>
<feature type="helix" evidence="3">
    <location>
        <begin position="215"/>
        <end position="226"/>
    </location>
</feature>
<feature type="strand" evidence="4">
    <location>
        <begin position="233"/>
        <end position="236"/>
    </location>
</feature>
<feature type="strand" evidence="3">
    <location>
        <begin position="240"/>
        <end position="244"/>
    </location>
</feature>
<feature type="strand" evidence="3">
    <location>
        <begin position="247"/>
        <end position="251"/>
    </location>
</feature>
<feature type="strand" evidence="3">
    <location>
        <begin position="255"/>
        <end position="259"/>
    </location>
</feature>
<feature type="helix" evidence="3">
    <location>
        <begin position="260"/>
        <end position="267"/>
    </location>
</feature>
<feature type="helix" evidence="3">
    <location>
        <begin position="275"/>
        <end position="283"/>
    </location>
</feature>
<feature type="helix" evidence="3">
    <location>
        <begin position="292"/>
        <end position="301"/>
    </location>
</feature>
<feature type="strand" evidence="6">
    <location>
        <begin position="302"/>
        <end position="304"/>
    </location>
</feature>
<feature type="helix" evidence="3">
    <location>
        <begin position="305"/>
        <end position="337"/>
    </location>
</feature>
<feature type="helix" evidence="3">
    <location>
        <begin position="341"/>
        <end position="344"/>
    </location>
</feature>
<feature type="helix" evidence="3">
    <location>
        <begin position="349"/>
        <end position="364"/>
    </location>
</feature>
<feature type="helix" evidence="3">
    <location>
        <begin position="374"/>
        <end position="379"/>
    </location>
</feature>
<feature type="turn" evidence="2">
    <location>
        <begin position="380"/>
        <end position="382"/>
    </location>
</feature>
<feature type="strand" evidence="3">
    <location>
        <begin position="395"/>
        <end position="405"/>
    </location>
</feature>
<feature type="helix" evidence="3">
    <location>
        <begin position="408"/>
        <end position="416"/>
    </location>
</feature>
<feature type="turn" evidence="3">
    <location>
        <begin position="420"/>
        <end position="422"/>
    </location>
</feature>
<feature type="strand" evidence="3">
    <location>
        <begin position="431"/>
        <end position="433"/>
    </location>
</feature>
<feature type="turn" evidence="3">
    <location>
        <begin position="435"/>
        <end position="437"/>
    </location>
</feature>
<feature type="strand" evidence="3">
    <location>
        <begin position="440"/>
        <end position="442"/>
    </location>
</feature>
<feature type="helix" evidence="3">
    <location>
        <begin position="448"/>
        <end position="469"/>
    </location>
</feature>
<feature type="helix" evidence="3">
    <location>
        <begin position="473"/>
        <end position="497"/>
    </location>
</feature>
<feature type="helix" evidence="3">
    <location>
        <begin position="507"/>
        <end position="531"/>
    </location>
</feature>
<feature type="strand" evidence="3">
    <location>
        <begin position="535"/>
        <end position="540"/>
    </location>
</feature>
<feature type="strand" evidence="3">
    <location>
        <begin position="543"/>
        <end position="547"/>
    </location>
</feature>
<feature type="helix" evidence="3">
    <location>
        <begin position="553"/>
        <end position="567"/>
    </location>
</feature>
<feature type="helix" evidence="3">
    <location>
        <begin position="568"/>
        <end position="570"/>
    </location>
</feature>
<feature type="strand" evidence="3">
    <location>
        <begin position="577"/>
        <end position="590"/>
    </location>
</feature>
<feature type="strand" evidence="3">
    <location>
        <begin position="593"/>
        <end position="598"/>
    </location>
</feature>
<feature type="strand" evidence="3">
    <location>
        <begin position="603"/>
        <end position="608"/>
    </location>
</feature>
<feature type="helix" evidence="3">
    <location>
        <begin position="609"/>
        <end position="611"/>
    </location>
</feature>
<feature type="strand" evidence="5">
    <location>
        <begin position="613"/>
        <end position="615"/>
    </location>
</feature>
<feature type="helix" evidence="3">
    <location>
        <begin position="617"/>
        <end position="633"/>
    </location>
</feature>
<feature type="helix" evidence="3">
    <location>
        <begin position="636"/>
        <end position="651"/>
    </location>
</feature>
<feature type="helix" evidence="3">
    <location>
        <begin position="657"/>
        <end position="660"/>
    </location>
</feature>
<feature type="strand" evidence="3">
    <location>
        <begin position="662"/>
        <end position="665"/>
    </location>
</feature>
<feature type="helix" evidence="3">
    <location>
        <begin position="670"/>
        <end position="672"/>
    </location>
</feature>
<feature type="helix" evidence="3">
    <location>
        <begin position="678"/>
        <end position="688"/>
    </location>
</feature>
<feature type="strand" evidence="3">
    <location>
        <begin position="698"/>
        <end position="705"/>
    </location>
</feature>
<feature type="helix" evidence="3">
    <location>
        <begin position="710"/>
        <end position="712"/>
    </location>
</feature>
<feature type="strand" evidence="3">
    <location>
        <begin position="714"/>
        <end position="716"/>
    </location>
</feature>
<feature type="helix" evidence="3">
    <location>
        <begin position="717"/>
        <end position="719"/>
    </location>
</feature>
<feature type="turn" evidence="3">
    <location>
        <begin position="722"/>
        <end position="724"/>
    </location>
</feature>
<feature type="helix" evidence="3">
    <location>
        <begin position="729"/>
        <end position="734"/>
    </location>
</feature>
<feature type="helix" evidence="3">
    <location>
        <begin position="737"/>
        <end position="745"/>
    </location>
</feature>
<feature type="helix" evidence="3">
    <location>
        <begin position="746"/>
        <end position="748"/>
    </location>
</feature>
<feature type="helix" evidence="3">
    <location>
        <begin position="752"/>
        <end position="754"/>
    </location>
</feature>